<evidence type="ECO:0000255" key="1">
    <source>
        <dbReference type="PROSITE-ProRule" id="PRU00253"/>
    </source>
</evidence>
<evidence type="ECO:0000305" key="2"/>
<keyword id="KW-0010">Activator</keyword>
<keyword id="KW-0238">DNA-binding</keyword>
<keyword id="KW-1185">Reference proteome</keyword>
<keyword id="KW-0804">Transcription</keyword>
<keyword id="KW-0805">Transcription regulation</keyword>
<reference key="1">
    <citation type="journal article" date="1991" name="Mol. Microbiol.">
        <title>Identification of cfxR, an activator gene of autotrophic CO2 fixation in Alcaligenes eutrophus.</title>
        <authorList>
            <person name="Windhoevel U."/>
            <person name="Bowien B."/>
        </authorList>
    </citation>
    <scope>NUCLEOTIDE SEQUENCE [GENOMIC DNA]</scope>
</reference>
<reference key="2">
    <citation type="journal article" date="2006" name="Nat. Biotechnol.">
        <title>Genome sequence of the bioplastic-producing 'Knallgas' bacterium Ralstonia eutropha H16.</title>
        <authorList>
            <person name="Pohlmann A."/>
            <person name="Fricke W.F."/>
            <person name="Reinecke F."/>
            <person name="Kusian B."/>
            <person name="Liesegang H."/>
            <person name="Cramm R."/>
            <person name="Eitinger T."/>
            <person name="Ewering C."/>
            <person name="Poetter M."/>
            <person name="Schwartz E."/>
            <person name="Strittmatter A."/>
            <person name="Voss I."/>
            <person name="Gottschalk G."/>
            <person name="Steinbuechel A."/>
            <person name="Friedrich B."/>
            <person name="Bowien B."/>
        </authorList>
    </citation>
    <scope>NUCLEOTIDE SEQUENCE [LARGE SCALE GENOMIC DNA]</scope>
    <source>
        <strain>ATCC 17699 / DSM 428 / KCTC 22496 / NCIMB 10442 / H16 / Stanier 337</strain>
    </source>
</reference>
<accession>P42722</accession>
<accession>Q0K1D9</accession>
<gene>
    <name type="primary">cfxR</name>
    <name type="synonym">cbbR</name>
    <name type="ordered locus">H16_B1396</name>
</gene>
<sequence>MSSFLRALTLRQLQIFVTVARHASFVRAAEELHLTQPAVSMQVKQLESVVGMALFERVKGQLTLTEPGDRLLHHASRILGEVKDAEEGLQAVKDVEQGSITIGLISTSKYFAPKLLAGFTALHPGVDLRIAEGNRETLLRLLQDNAIDLALMGRPPRELDAVSEPIAAHPHVLVASPRHPLHDAKGFDLQELRHETFLLREPGSGTRTVAEYMFRDHLFTPAKVITLGSNETIKQAVMAGMGISLLSLHTLGLELRTGEIGLLDVAGTPIERIWHVAHMSSKRLSPASESCRAYLLEHTAEFLGREYGGLMPGRRVA</sequence>
<dbReference type="EMBL" id="M65065">
    <property type="protein sequence ID" value="AAA21982.1"/>
    <property type="molecule type" value="Genomic_DNA"/>
</dbReference>
<dbReference type="EMBL" id="AM260480">
    <property type="protein sequence ID" value="CAJ96185.1"/>
    <property type="molecule type" value="Genomic_DNA"/>
</dbReference>
<dbReference type="PIR" id="S18583">
    <property type="entry name" value="S18583"/>
</dbReference>
<dbReference type="RefSeq" id="WP_010809288.1">
    <property type="nucleotide sequence ID" value="NZ_CP039288.1"/>
</dbReference>
<dbReference type="SMR" id="P42722"/>
<dbReference type="STRING" id="381666.H16_B1396"/>
<dbReference type="KEGG" id="reh:H16_B1396"/>
<dbReference type="eggNOG" id="COG0583">
    <property type="taxonomic scope" value="Bacteria"/>
</dbReference>
<dbReference type="HOGENOM" id="CLU_039613_6_1_4"/>
<dbReference type="OrthoDB" id="9785745at2"/>
<dbReference type="Proteomes" id="UP000008210">
    <property type="component" value="Chromosome 2"/>
</dbReference>
<dbReference type="GO" id="GO:0003700">
    <property type="term" value="F:DNA-binding transcription factor activity"/>
    <property type="evidence" value="ECO:0007669"/>
    <property type="project" value="InterPro"/>
</dbReference>
<dbReference type="GO" id="GO:0000976">
    <property type="term" value="F:transcription cis-regulatory region binding"/>
    <property type="evidence" value="ECO:0007669"/>
    <property type="project" value="TreeGrafter"/>
</dbReference>
<dbReference type="CDD" id="cd08419">
    <property type="entry name" value="PBP2_CbbR_RubisCO_like"/>
    <property type="match status" value="1"/>
</dbReference>
<dbReference type="FunFam" id="1.10.10.10:FF:000001">
    <property type="entry name" value="LysR family transcriptional regulator"/>
    <property type="match status" value="1"/>
</dbReference>
<dbReference type="Gene3D" id="3.40.190.10">
    <property type="entry name" value="Periplasmic binding protein-like II"/>
    <property type="match status" value="2"/>
</dbReference>
<dbReference type="Gene3D" id="1.10.10.10">
    <property type="entry name" value="Winged helix-like DNA-binding domain superfamily/Winged helix DNA-binding domain"/>
    <property type="match status" value="1"/>
</dbReference>
<dbReference type="InterPro" id="IPR005119">
    <property type="entry name" value="LysR_subst-bd"/>
</dbReference>
<dbReference type="InterPro" id="IPR000847">
    <property type="entry name" value="Tscrpt_reg_HTH_LysR"/>
</dbReference>
<dbReference type="InterPro" id="IPR036388">
    <property type="entry name" value="WH-like_DNA-bd_sf"/>
</dbReference>
<dbReference type="InterPro" id="IPR036390">
    <property type="entry name" value="WH_DNA-bd_sf"/>
</dbReference>
<dbReference type="PANTHER" id="PTHR30126:SF5">
    <property type="entry name" value="HTH-TYPE TRANSCRIPTIONAL ACTIVATOR CMPR"/>
    <property type="match status" value="1"/>
</dbReference>
<dbReference type="PANTHER" id="PTHR30126">
    <property type="entry name" value="HTH-TYPE TRANSCRIPTIONAL REGULATOR"/>
    <property type="match status" value="1"/>
</dbReference>
<dbReference type="Pfam" id="PF00126">
    <property type="entry name" value="HTH_1"/>
    <property type="match status" value="1"/>
</dbReference>
<dbReference type="Pfam" id="PF03466">
    <property type="entry name" value="LysR_substrate"/>
    <property type="match status" value="1"/>
</dbReference>
<dbReference type="PRINTS" id="PR00039">
    <property type="entry name" value="HTHLYSR"/>
</dbReference>
<dbReference type="SUPFAM" id="SSF53850">
    <property type="entry name" value="Periplasmic binding protein-like II"/>
    <property type="match status" value="1"/>
</dbReference>
<dbReference type="SUPFAM" id="SSF46785">
    <property type="entry name" value="Winged helix' DNA-binding domain"/>
    <property type="match status" value="1"/>
</dbReference>
<dbReference type="PROSITE" id="PS50931">
    <property type="entry name" value="HTH_LYSR"/>
    <property type="match status" value="1"/>
</dbReference>
<protein>
    <recommendedName>
        <fullName>HTH-type transcriptional regulator CfxR</fullName>
    </recommendedName>
    <alternativeName>
        <fullName>RuBisCO operon transcriptional regulator</fullName>
    </alternativeName>
</protein>
<proteinExistence type="inferred from homology"/>
<feature type="chain" id="PRO_0000105609" description="HTH-type transcriptional regulator CfxR">
    <location>
        <begin position="1"/>
        <end position="317"/>
    </location>
</feature>
<feature type="domain" description="HTH lysR-type" evidence="1">
    <location>
        <begin position="8"/>
        <end position="65"/>
    </location>
</feature>
<feature type="DNA-binding region" description="H-T-H motif" evidence="1">
    <location>
        <begin position="25"/>
        <end position="44"/>
    </location>
</feature>
<organism>
    <name type="scientific">Cupriavidus necator (strain ATCC 17699 / DSM 428 / KCTC 22496 / NCIMB 10442 / H16 / Stanier 337)</name>
    <name type="common">Ralstonia eutropha</name>
    <dbReference type="NCBI Taxonomy" id="381666"/>
    <lineage>
        <taxon>Bacteria</taxon>
        <taxon>Pseudomonadati</taxon>
        <taxon>Pseudomonadota</taxon>
        <taxon>Betaproteobacteria</taxon>
        <taxon>Burkholderiales</taxon>
        <taxon>Burkholderiaceae</taxon>
        <taxon>Cupriavidus</taxon>
    </lineage>
</organism>
<comment type="function">
    <text>Trans-acting transcriptional regulator of RuBisCO genes (cfxLS) expression.</text>
</comment>
<comment type="similarity">
    <text evidence="2">Belongs to the LysR transcriptional regulatory family.</text>
</comment>
<name>CFXR_CUPNH</name>